<reference key="1">
    <citation type="submission" date="2006-06" db="EMBL/GenBank/DDBJ databases">
        <title>Complete sequence of chromosome of Mycobacterium sp. MCS.</title>
        <authorList>
            <consortium name="US DOE Joint Genome Institute"/>
            <person name="Copeland A."/>
            <person name="Lucas S."/>
            <person name="Lapidus A."/>
            <person name="Barry K."/>
            <person name="Detter J.C."/>
            <person name="Glavina del Rio T."/>
            <person name="Hammon N."/>
            <person name="Israni S."/>
            <person name="Dalin E."/>
            <person name="Tice H."/>
            <person name="Pitluck S."/>
            <person name="Martinez M."/>
            <person name="Schmutz J."/>
            <person name="Larimer F."/>
            <person name="Land M."/>
            <person name="Hauser L."/>
            <person name="Kyrpides N."/>
            <person name="Kim E."/>
            <person name="Miller C.D."/>
            <person name="Hughes J.E."/>
            <person name="Anderson A.J."/>
            <person name="Sims R.C."/>
            <person name="Richardson P."/>
        </authorList>
    </citation>
    <scope>NUCLEOTIDE SEQUENCE [LARGE SCALE GENOMIC DNA]</scope>
    <source>
        <strain>MCS</strain>
    </source>
</reference>
<keyword id="KW-0686">Riboflavin biosynthesis</keyword>
<keyword id="KW-0808">Transferase</keyword>
<dbReference type="EC" id="2.5.1.78" evidence="1"/>
<dbReference type="EMBL" id="CP000384">
    <property type="protein sequence ID" value="ABG08499.1"/>
    <property type="molecule type" value="Genomic_DNA"/>
</dbReference>
<dbReference type="SMR" id="Q1B9D5"/>
<dbReference type="KEGG" id="mmc:Mmcs_2391"/>
<dbReference type="HOGENOM" id="CLU_089358_1_2_11"/>
<dbReference type="BioCyc" id="MSP164756:G1G6O-2443-MONOMER"/>
<dbReference type="UniPathway" id="UPA00275">
    <property type="reaction ID" value="UER00404"/>
</dbReference>
<dbReference type="GO" id="GO:0005829">
    <property type="term" value="C:cytosol"/>
    <property type="evidence" value="ECO:0007669"/>
    <property type="project" value="TreeGrafter"/>
</dbReference>
<dbReference type="GO" id="GO:0009349">
    <property type="term" value="C:riboflavin synthase complex"/>
    <property type="evidence" value="ECO:0007669"/>
    <property type="project" value="InterPro"/>
</dbReference>
<dbReference type="GO" id="GO:0000906">
    <property type="term" value="F:6,7-dimethyl-8-ribityllumazine synthase activity"/>
    <property type="evidence" value="ECO:0007669"/>
    <property type="project" value="UniProtKB-UniRule"/>
</dbReference>
<dbReference type="GO" id="GO:0009231">
    <property type="term" value="P:riboflavin biosynthetic process"/>
    <property type="evidence" value="ECO:0007669"/>
    <property type="project" value="UniProtKB-UniRule"/>
</dbReference>
<dbReference type="CDD" id="cd09209">
    <property type="entry name" value="Lumazine_synthase-I"/>
    <property type="match status" value="1"/>
</dbReference>
<dbReference type="Gene3D" id="3.40.50.960">
    <property type="entry name" value="Lumazine/riboflavin synthase"/>
    <property type="match status" value="1"/>
</dbReference>
<dbReference type="HAMAP" id="MF_00178">
    <property type="entry name" value="Lumazine_synth"/>
    <property type="match status" value="1"/>
</dbReference>
<dbReference type="InterPro" id="IPR034964">
    <property type="entry name" value="LS"/>
</dbReference>
<dbReference type="InterPro" id="IPR002180">
    <property type="entry name" value="LS/RS"/>
</dbReference>
<dbReference type="InterPro" id="IPR036467">
    <property type="entry name" value="LS/RS_sf"/>
</dbReference>
<dbReference type="NCBIfam" id="TIGR00114">
    <property type="entry name" value="lumazine-synth"/>
    <property type="match status" value="1"/>
</dbReference>
<dbReference type="PANTHER" id="PTHR21058:SF0">
    <property type="entry name" value="6,7-DIMETHYL-8-RIBITYLLUMAZINE SYNTHASE"/>
    <property type="match status" value="1"/>
</dbReference>
<dbReference type="PANTHER" id="PTHR21058">
    <property type="entry name" value="6,7-DIMETHYL-8-RIBITYLLUMAZINE SYNTHASE DMRL SYNTHASE LUMAZINE SYNTHASE"/>
    <property type="match status" value="1"/>
</dbReference>
<dbReference type="Pfam" id="PF00885">
    <property type="entry name" value="DMRL_synthase"/>
    <property type="match status" value="1"/>
</dbReference>
<dbReference type="SUPFAM" id="SSF52121">
    <property type="entry name" value="Lumazine synthase"/>
    <property type="match status" value="1"/>
</dbReference>
<sequence length="160" mass="16110">MSGGAGVPDLPQIDASGMKVGIVASTWHSTICDALLDGALKVTESANVSEPTVVRVLGAIEIPVVAQALAADHEAVIALGVVIRGQTPHFDYVCDAVTQGLTRVSLDASTPVANGVLTTNTEEQALDRAGLPGSAEDKGAQAAAAALSTALTLQGLRGRS</sequence>
<accession>Q1B9D5</accession>
<proteinExistence type="inferred from homology"/>
<organism>
    <name type="scientific">Mycobacterium sp. (strain MCS)</name>
    <dbReference type="NCBI Taxonomy" id="164756"/>
    <lineage>
        <taxon>Bacteria</taxon>
        <taxon>Bacillati</taxon>
        <taxon>Actinomycetota</taxon>
        <taxon>Actinomycetes</taxon>
        <taxon>Mycobacteriales</taxon>
        <taxon>Mycobacteriaceae</taxon>
        <taxon>Mycobacterium</taxon>
    </lineage>
</organism>
<gene>
    <name evidence="1" type="primary">ribH</name>
    <name type="ordered locus">Mmcs_2391</name>
</gene>
<comment type="function">
    <text evidence="1">Catalyzes the formation of 6,7-dimethyl-8-ribityllumazine by condensation of 5-amino-6-(D-ribitylamino)uracil with 3,4-dihydroxy-2-butanone 4-phosphate. This is the penultimate step in the biosynthesis of riboflavin.</text>
</comment>
<comment type="catalytic activity">
    <reaction evidence="1">
        <text>(2S)-2-hydroxy-3-oxobutyl phosphate + 5-amino-6-(D-ribitylamino)uracil = 6,7-dimethyl-8-(1-D-ribityl)lumazine + phosphate + 2 H2O + H(+)</text>
        <dbReference type="Rhea" id="RHEA:26152"/>
        <dbReference type="ChEBI" id="CHEBI:15377"/>
        <dbReference type="ChEBI" id="CHEBI:15378"/>
        <dbReference type="ChEBI" id="CHEBI:15934"/>
        <dbReference type="ChEBI" id="CHEBI:43474"/>
        <dbReference type="ChEBI" id="CHEBI:58201"/>
        <dbReference type="ChEBI" id="CHEBI:58830"/>
        <dbReference type="EC" id="2.5.1.78"/>
    </reaction>
</comment>
<comment type="pathway">
    <text evidence="1">Cofactor biosynthesis; riboflavin biosynthesis; riboflavin from 2-hydroxy-3-oxobutyl phosphate and 5-amino-6-(D-ribitylamino)uracil: step 1/2.</text>
</comment>
<comment type="subunit">
    <text evidence="1">Homopentamer.</text>
</comment>
<comment type="similarity">
    <text evidence="1">Belongs to the DMRL synthase family.</text>
</comment>
<feature type="chain" id="PRO_1000040457" description="6,7-dimethyl-8-ribityllumazine synthase">
    <location>
        <begin position="1"/>
        <end position="160"/>
    </location>
</feature>
<feature type="active site" description="Proton donor" evidence="1">
    <location>
        <position position="89"/>
    </location>
</feature>
<feature type="binding site" evidence="1">
    <location>
        <position position="27"/>
    </location>
    <ligand>
        <name>5-amino-6-(D-ribitylamino)uracil</name>
        <dbReference type="ChEBI" id="CHEBI:15934"/>
    </ligand>
</feature>
<feature type="binding site" evidence="1">
    <location>
        <begin position="59"/>
        <end position="61"/>
    </location>
    <ligand>
        <name>5-amino-6-(D-ribitylamino)uracil</name>
        <dbReference type="ChEBI" id="CHEBI:15934"/>
    </ligand>
</feature>
<feature type="binding site" evidence="1">
    <location>
        <begin position="81"/>
        <end position="83"/>
    </location>
    <ligand>
        <name>5-amino-6-(D-ribitylamino)uracil</name>
        <dbReference type="ChEBI" id="CHEBI:15934"/>
    </ligand>
</feature>
<feature type="binding site" evidence="1">
    <location>
        <begin position="86"/>
        <end position="87"/>
    </location>
    <ligand>
        <name>(2S)-2-hydroxy-3-oxobutyl phosphate</name>
        <dbReference type="ChEBI" id="CHEBI:58830"/>
    </ligand>
</feature>
<feature type="binding site" evidence="1">
    <location>
        <position position="114"/>
    </location>
    <ligand>
        <name>5-amino-6-(D-ribitylamino)uracil</name>
        <dbReference type="ChEBI" id="CHEBI:15934"/>
    </ligand>
</feature>
<feature type="binding site" evidence="1">
    <location>
        <position position="128"/>
    </location>
    <ligand>
        <name>(2S)-2-hydroxy-3-oxobutyl phosphate</name>
        <dbReference type="ChEBI" id="CHEBI:58830"/>
    </ligand>
</feature>
<name>RISB_MYCSS</name>
<evidence type="ECO:0000255" key="1">
    <source>
        <dbReference type="HAMAP-Rule" id="MF_00178"/>
    </source>
</evidence>
<protein>
    <recommendedName>
        <fullName evidence="1">6,7-dimethyl-8-ribityllumazine synthase</fullName>
        <shortName evidence="1">DMRL synthase</shortName>
        <shortName evidence="1">LS</shortName>
        <shortName evidence="1">Lumazine synthase</shortName>
        <ecNumber evidence="1">2.5.1.78</ecNumber>
    </recommendedName>
</protein>